<organism>
    <name type="scientific">Neisseria meningitidis serogroup C (strain 053442)</name>
    <dbReference type="NCBI Taxonomy" id="374833"/>
    <lineage>
        <taxon>Bacteria</taxon>
        <taxon>Pseudomonadati</taxon>
        <taxon>Pseudomonadota</taxon>
        <taxon>Betaproteobacteria</taxon>
        <taxon>Neisseriales</taxon>
        <taxon>Neisseriaceae</taxon>
        <taxon>Neisseria</taxon>
    </lineage>
</organism>
<sequence length="240" mass="27683">MKPAYFISDLHLSEKHPELTALLLRFLRSSAAGQARAVYILGDLFDFWVGDDEVSELNTSVAREIRKLSDKGVAVFFVRGNRDFLIGQDFCRQAGMTLLPDYSVLDLFGCKTLICHGDTLCTDDRAYQRFRKIVHRKRLQKLFLMLPLKWRTRLAAKIRRVSKMEKQVKPADIMDVNAAFTARQVRAFNAERLIHGHTHREHIHHENGFTRIVLGDWHNDYASILRVDGDGAVFVPLEKY</sequence>
<accession>A9M211</accession>
<name>LPXH_NEIM0</name>
<gene>
    <name evidence="1" type="primary">lpxH</name>
    <name type="ordered locus">NMCC_0485</name>
</gene>
<dbReference type="EC" id="3.6.1.54" evidence="1"/>
<dbReference type="EMBL" id="CP000381">
    <property type="protein sequence ID" value="ABX72686.1"/>
    <property type="molecule type" value="Genomic_DNA"/>
</dbReference>
<dbReference type="RefSeq" id="WP_002245939.1">
    <property type="nucleotide sequence ID" value="NC_010120.1"/>
</dbReference>
<dbReference type="SMR" id="A9M211"/>
<dbReference type="KEGG" id="nmn:NMCC_0485"/>
<dbReference type="HOGENOM" id="CLU_074586_0_0_4"/>
<dbReference type="UniPathway" id="UPA00359">
    <property type="reaction ID" value="UER00480"/>
</dbReference>
<dbReference type="Proteomes" id="UP000001177">
    <property type="component" value="Chromosome"/>
</dbReference>
<dbReference type="GO" id="GO:0005737">
    <property type="term" value="C:cytoplasm"/>
    <property type="evidence" value="ECO:0007669"/>
    <property type="project" value="InterPro"/>
</dbReference>
<dbReference type="GO" id="GO:0019897">
    <property type="term" value="C:extrinsic component of plasma membrane"/>
    <property type="evidence" value="ECO:0007669"/>
    <property type="project" value="UniProtKB-UniRule"/>
</dbReference>
<dbReference type="GO" id="GO:0030145">
    <property type="term" value="F:manganese ion binding"/>
    <property type="evidence" value="ECO:0007669"/>
    <property type="project" value="UniProtKB-UniRule"/>
</dbReference>
<dbReference type="GO" id="GO:0008758">
    <property type="term" value="F:UDP-2,3-diacylglucosamine hydrolase activity"/>
    <property type="evidence" value="ECO:0007669"/>
    <property type="project" value="UniProtKB-UniRule"/>
</dbReference>
<dbReference type="GO" id="GO:0009245">
    <property type="term" value="P:lipid A biosynthetic process"/>
    <property type="evidence" value="ECO:0007669"/>
    <property type="project" value="UniProtKB-UniRule"/>
</dbReference>
<dbReference type="CDD" id="cd07398">
    <property type="entry name" value="MPP_YbbF-LpxH"/>
    <property type="match status" value="1"/>
</dbReference>
<dbReference type="Gene3D" id="3.60.21.10">
    <property type="match status" value="1"/>
</dbReference>
<dbReference type="HAMAP" id="MF_00575">
    <property type="entry name" value="LpxH"/>
    <property type="match status" value="1"/>
</dbReference>
<dbReference type="InterPro" id="IPR004843">
    <property type="entry name" value="Calcineurin-like_PHP_ApaH"/>
</dbReference>
<dbReference type="InterPro" id="IPR043461">
    <property type="entry name" value="LpxH-like"/>
</dbReference>
<dbReference type="InterPro" id="IPR029052">
    <property type="entry name" value="Metallo-depent_PP-like"/>
</dbReference>
<dbReference type="InterPro" id="IPR010138">
    <property type="entry name" value="UDP-diacylglucosamine_Hdrlase"/>
</dbReference>
<dbReference type="NCBIfam" id="TIGR01854">
    <property type="entry name" value="lipid_A_lpxH"/>
    <property type="match status" value="1"/>
</dbReference>
<dbReference type="NCBIfam" id="NF003743">
    <property type="entry name" value="PRK05340.1"/>
    <property type="match status" value="1"/>
</dbReference>
<dbReference type="PANTHER" id="PTHR34990:SF1">
    <property type="entry name" value="UDP-2,3-DIACYLGLUCOSAMINE HYDROLASE"/>
    <property type="match status" value="1"/>
</dbReference>
<dbReference type="PANTHER" id="PTHR34990">
    <property type="entry name" value="UDP-2,3-DIACYLGLUCOSAMINE HYDROLASE-RELATED"/>
    <property type="match status" value="1"/>
</dbReference>
<dbReference type="Pfam" id="PF00149">
    <property type="entry name" value="Metallophos"/>
    <property type="match status" value="1"/>
</dbReference>
<dbReference type="SUPFAM" id="SSF56300">
    <property type="entry name" value="Metallo-dependent phosphatases"/>
    <property type="match status" value="1"/>
</dbReference>
<keyword id="KW-0997">Cell inner membrane</keyword>
<keyword id="KW-1003">Cell membrane</keyword>
<keyword id="KW-0378">Hydrolase</keyword>
<keyword id="KW-0441">Lipid A biosynthesis</keyword>
<keyword id="KW-0444">Lipid biosynthesis</keyword>
<keyword id="KW-0443">Lipid metabolism</keyword>
<keyword id="KW-0464">Manganese</keyword>
<keyword id="KW-0472">Membrane</keyword>
<keyword id="KW-0479">Metal-binding</keyword>
<evidence type="ECO:0000255" key="1">
    <source>
        <dbReference type="HAMAP-Rule" id="MF_00575"/>
    </source>
</evidence>
<protein>
    <recommendedName>
        <fullName evidence="1">UDP-2,3-diacylglucosamine hydrolase</fullName>
        <ecNumber evidence="1">3.6.1.54</ecNumber>
    </recommendedName>
    <alternativeName>
        <fullName evidence="1">UDP-2,3-diacylglucosamine diphosphatase</fullName>
    </alternativeName>
</protein>
<reference key="1">
    <citation type="journal article" date="2008" name="Genomics">
        <title>Characterization of ST-4821 complex, a unique Neisseria meningitidis clone.</title>
        <authorList>
            <person name="Peng J."/>
            <person name="Yang L."/>
            <person name="Yang F."/>
            <person name="Yang J."/>
            <person name="Yan Y."/>
            <person name="Nie H."/>
            <person name="Zhang X."/>
            <person name="Xiong Z."/>
            <person name="Jiang Y."/>
            <person name="Cheng F."/>
            <person name="Xu X."/>
            <person name="Chen S."/>
            <person name="Sun L."/>
            <person name="Li W."/>
            <person name="Shen Y."/>
            <person name="Shao Z."/>
            <person name="Liang X."/>
            <person name="Xu J."/>
            <person name="Jin Q."/>
        </authorList>
    </citation>
    <scope>NUCLEOTIDE SEQUENCE [LARGE SCALE GENOMIC DNA]</scope>
    <source>
        <strain>053442</strain>
    </source>
</reference>
<feature type="chain" id="PRO_1000082337" description="UDP-2,3-diacylglucosamine hydrolase">
    <location>
        <begin position="1"/>
        <end position="240"/>
    </location>
</feature>
<feature type="binding site" evidence="1">
    <location>
        <position position="9"/>
    </location>
    <ligand>
        <name>Mn(2+)</name>
        <dbReference type="ChEBI" id="CHEBI:29035"/>
        <label>1</label>
    </ligand>
</feature>
<feature type="binding site" evidence="1">
    <location>
        <position position="11"/>
    </location>
    <ligand>
        <name>Mn(2+)</name>
        <dbReference type="ChEBI" id="CHEBI:29035"/>
        <label>1</label>
    </ligand>
</feature>
<feature type="binding site" evidence="1">
    <location>
        <position position="43"/>
    </location>
    <ligand>
        <name>Mn(2+)</name>
        <dbReference type="ChEBI" id="CHEBI:29035"/>
        <label>1</label>
    </ligand>
</feature>
<feature type="binding site" evidence="1">
    <location>
        <position position="43"/>
    </location>
    <ligand>
        <name>Mn(2+)</name>
        <dbReference type="ChEBI" id="CHEBI:29035"/>
        <label>2</label>
    </ligand>
</feature>
<feature type="binding site" evidence="1">
    <location>
        <begin position="81"/>
        <end position="82"/>
    </location>
    <ligand>
        <name>substrate</name>
    </ligand>
</feature>
<feature type="binding site" evidence="1">
    <location>
        <position position="81"/>
    </location>
    <ligand>
        <name>Mn(2+)</name>
        <dbReference type="ChEBI" id="CHEBI:29035"/>
        <label>2</label>
    </ligand>
</feature>
<feature type="binding site" evidence="1">
    <location>
        <position position="116"/>
    </location>
    <ligand>
        <name>Mn(2+)</name>
        <dbReference type="ChEBI" id="CHEBI:29035"/>
        <label>2</label>
    </ligand>
</feature>
<feature type="binding site" evidence="1">
    <location>
        <position position="124"/>
    </location>
    <ligand>
        <name>substrate</name>
    </ligand>
</feature>
<feature type="binding site" evidence="1">
    <location>
        <position position="162"/>
    </location>
    <ligand>
        <name>substrate</name>
    </ligand>
</feature>
<feature type="binding site" evidence="1">
    <location>
        <position position="166"/>
    </location>
    <ligand>
        <name>substrate</name>
    </ligand>
</feature>
<feature type="binding site" evidence="1">
    <location>
        <position position="169"/>
    </location>
    <ligand>
        <name>substrate</name>
    </ligand>
</feature>
<feature type="binding site" evidence="1">
    <location>
        <position position="197"/>
    </location>
    <ligand>
        <name>Mn(2+)</name>
        <dbReference type="ChEBI" id="CHEBI:29035"/>
        <label>2</label>
    </ligand>
</feature>
<feature type="binding site" evidence="1">
    <location>
        <position position="197"/>
    </location>
    <ligand>
        <name>substrate</name>
    </ligand>
</feature>
<feature type="binding site" evidence="1">
    <location>
        <position position="199"/>
    </location>
    <ligand>
        <name>Mn(2+)</name>
        <dbReference type="ChEBI" id="CHEBI:29035"/>
        <label>1</label>
    </ligand>
</feature>
<proteinExistence type="inferred from homology"/>
<comment type="function">
    <text evidence="1">Hydrolyzes the pyrophosphate bond of UDP-2,3-diacylglucosamine to yield 2,3-diacylglucosamine 1-phosphate (lipid X) and UMP by catalyzing the attack of water at the alpha-P atom. Involved in the biosynthesis of lipid A, a phosphorylated glycolipid that anchors the lipopolysaccharide to the outer membrane of the cell.</text>
</comment>
<comment type="catalytic activity">
    <reaction evidence="1">
        <text>UDP-2-N,3-O-bis[(3R)-3-hydroxytetradecanoyl]-alpha-D-glucosamine + H2O = 2-N,3-O-bis[(3R)-3-hydroxytetradecanoyl]-alpha-D-glucosaminyl 1-phosphate + UMP + 2 H(+)</text>
        <dbReference type="Rhea" id="RHEA:25213"/>
        <dbReference type="ChEBI" id="CHEBI:15377"/>
        <dbReference type="ChEBI" id="CHEBI:15378"/>
        <dbReference type="ChEBI" id="CHEBI:57865"/>
        <dbReference type="ChEBI" id="CHEBI:57957"/>
        <dbReference type="ChEBI" id="CHEBI:78847"/>
        <dbReference type="EC" id="3.6.1.54"/>
    </reaction>
</comment>
<comment type="cofactor">
    <cofactor evidence="1">
        <name>Mn(2+)</name>
        <dbReference type="ChEBI" id="CHEBI:29035"/>
    </cofactor>
    <text evidence="1">Binds 2 Mn(2+) ions per subunit in a binuclear metal center.</text>
</comment>
<comment type="pathway">
    <text evidence="1">Glycolipid biosynthesis; lipid IV(A) biosynthesis; lipid IV(A) from (3R)-3-hydroxytetradecanoyl-[acyl-carrier-protein] and UDP-N-acetyl-alpha-D-glucosamine: step 4/6.</text>
</comment>
<comment type="subcellular location">
    <subcellularLocation>
        <location evidence="1">Cell inner membrane</location>
        <topology evidence="1">Peripheral membrane protein</topology>
        <orientation evidence="1">Cytoplasmic side</orientation>
    </subcellularLocation>
</comment>
<comment type="similarity">
    <text evidence="1">Belongs to the LpxH family.</text>
</comment>